<reference key="1">
    <citation type="journal article" date="1994" name="Curr. Genet.">
        <title>Structure and differential expression of two distinct genes encoding the chloroplast elongation factor Tu in tobacco.</title>
        <authorList>
            <person name="Sugita M."/>
            <person name="Murayama Y."/>
            <person name="Sugiura M."/>
        </authorList>
    </citation>
    <scope>NUCLEOTIDE SEQUENCE [GENOMIC DNA]</scope>
</reference>
<reference key="2">
    <citation type="journal article" date="1993" name="Plant Mol. Biol.">
        <title>Purification of chloroplast elongation factor Tu and cDNA analysis in tobacco: the existence of two chloroplast elongation factor Tu species.</title>
        <authorList>
            <person name="Murayama Y."/>
            <person name="Matsubayashi T."/>
            <person name="Sugita M."/>
            <person name="Sugiura M."/>
        </authorList>
    </citation>
    <scope>NUCLEOTIDE SEQUENCE [MRNA] OF 1-457</scope>
    <source>
        <tissue>Leaf</tissue>
    </source>
</reference>
<name>EFTUA_NICSY</name>
<dbReference type="EMBL" id="D11469">
    <property type="protein sequence ID" value="BAA02027.1"/>
    <property type="molecule type" value="Genomic_DNA"/>
</dbReference>
<dbReference type="EMBL" id="D11375">
    <property type="protein sequence ID" value="BAA01974.1"/>
    <property type="molecule type" value="mRNA"/>
</dbReference>
<dbReference type="PIR" id="S36183">
    <property type="entry name" value="S36183"/>
</dbReference>
<dbReference type="RefSeq" id="XP_009779094.1">
    <property type="nucleotide sequence ID" value="XM_009780792.1"/>
</dbReference>
<dbReference type="SMR" id="Q40450"/>
<dbReference type="STRING" id="4096.Q40450"/>
<dbReference type="eggNOG" id="KOG0460">
    <property type="taxonomic scope" value="Eukaryota"/>
</dbReference>
<dbReference type="Proteomes" id="UP000189701">
    <property type="component" value="Unplaced"/>
</dbReference>
<dbReference type="GO" id="GO:0009507">
    <property type="term" value="C:chloroplast"/>
    <property type="evidence" value="ECO:0007669"/>
    <property type="project" value="UniProtKB-SubCell"/>
</dbReference>
<dbReference type="GO" id="GO:0005739">
    <property type="term" value="C:mitochondrion"/>
    <property type="evidence" value="ECO:0007669"/>
    <property type="project" value="TreeGrafter"/>
</dbReference>
<dbReference type="GO" id="GO:0005525">
    <property type="term" value="F:GTP binding"/>
    <property type="evidence" value="ECO:0007669"/>
    <property type="project" value="UniProtKB-KW"/>
</dbReference>
<dbReference type="GO" id="GO:0003924">
    <property type="term" value="F:GTPase activity"/>
    <property type="evidence" value="ECO:0007669"/>
    <property type="project" value="InterPro"/>
</dbReference>
<dbReference type="GO" id="GO:0003746">
    <property type="term" value="F:translation elongation factor activity"/>
    <property type="evidence" value="ECO:0007669"/>
    <property type="project" value="UniProtKB-KW"/>
</dbReference>
<dbReference type="GO" id="GO:0070125">
    <property type="term" value="P:mitochondrial translational elongation"/>
    <property type="evidence" value="ECO:0007669"/>
    <property type="project" value="TreeGrafter"/>
</dbReference>
<dbReference type="CDD" id="cd01884">
    <property type="entry name" value="EF_Tu"/>
    <property type="match status" value="1"/>
</dbReference>
<dbReference type="CDD" id="cd03697">
    <property type="entry name" value="EFTU_II"/>
    <property type="match status" value="1"/>
</dbReference>
<dbReference type="CDD" id="cd03707">
    <property type="entry name" value="EFTU_III"/>
    <property type="match status" value="1"/>
</dbReference>
<dbReference type="FunFam" id="2.40.30.10:FF:000001">
    <property type="entry name" value="Elongation factor Tu"/>
    <property type="match status" value="1"/>
</dbReference>
<dbReference type="FunFam" id="2.40.30.10:FF:000046">
    <property type="entry name" value="Elongation factor Tu"/>
    <property type="match status" value="1"/>
</dbReference>
<dbReference type="FunFam" id="3.40.50.300:FF:000003">
    <property type="entry name" value="Elongation factor Tu"/>
    <property type="match status" value="1"/>
</dbReference>
<dbReference type="Gene3D" id="3.40.50.300">
    <property type="entry name" value="P-loop containing nucleotide triphosphate hydrolases"/>
    <property type="match status" value="1"/>
</dbReference>
<dbReference type="Gene3D" id="2.40.30.10">
    <property type="entry name" value="Translation factors"/>
    <property type="match status" value="2"/>
</dbReference>
<dbReference type="HAMAP" id="MF_00118_B">
    <property type="entry name" value="EF_Tu_B"/>
    <property type="match status" value="1"/>
</dbReference>
<dbReference type="InterPro" id="IPR041709">
    <property type="entry name" value="EF-Tu_GTP-bd"/>
</dbReference>
<dbReference type="InterPro" id="IPR050055">
    <property type="entry name" value="EF-Tu_GTPase"/>
</dbReference>
<dbReference type="InterPro" id="IPR004161">
    <property type="entry name" value="EFTu-like_2"/>
</dbReference>
<dbReference type="InterPro" id="IPR033720">
    <property type="entry name" value="EFTU_2"/>
</dbReference>
<dbReference type="InterPro" id="IPR031157">
    <property type="entry name" value="G_TR_CS"/>
</dbReference>
<dbReference type="InterPro" id="IPR027417">
    <property type="entry name" value="P-loop_NTPase"/>
</dbReference>
<dbReference type="InterPro" id="IPR005225">
    <property type="entry name" value="Small_GTP-bd"/>
</dbReference>
<dbReference type="InterPro" id="IPR000795">
    <property type="entry name" value="T_Tr_GTP-bd_dom"/>
</dbReference>
<dbReference type="InterPro" id="IPR009000">
    <property type="entry name" value="Transl_B-barrel_sf"/>
</dbReference>
<dbReference type="InterPro" id="IPR009001">
    <property type="entry name" value="Transl_elong_EF1A/Init_IF2_C"/>
</dbReference>
<dbReference type="InterPro" id="IPR004541">
    <property type="entry name" value="Transl_elong_EFTu/EF1A_bac/org"/>
</dbReference>
<dbReference type="InterPro" id="IPR004160">
    <property type="entry name" value="Transl_elong_EFTu/EF1A_C"/>
</dbReference>
<dbReference type="NCBIfam" id="TIGR00485">
    <property type="entry name" value="EF-Tu"/>
    <property type="match status" value="1"/>
</dbReference>
<dbReference type="NCBIfam" id="NF000766">
    <property type="entry name" value="PRK00049.1"/>
    <property type="match status" value="1"/>
</dbReference>
<dbReference type="NCBIfam" id="NF009372">
    <property type="entry name" value="PRK12735.1"/>
    <property type="match status" value="1"/>
</dbReference>
<dbReference type="NCBIfam" id="NF009373">
    <property type="entry name" value="PRK12736.1"/>
    <property type="match status" value="1"/>
</dbReference>
<dbReference type="NCBIfam" id="TIGR00231">
    <property type="entry name" value="small_GTP"/>
    <property type="match status" value="1"/>
</dbReference>
<dbReference type="PANTHER" id="PTHR43721:SF34">
    <property type="entry name" value="ELONGATION FACTOR TU, CHLOROPLASTIC"/>
    <property type="match status" value="1"/>
</dbReference>
<dbReference type="PANTHER" id="PTHR43721">
    <property type="entry name" value="ELONGATION FACTOR TU-RELATED"/>
    <property type="match status" value="1"/>
</dbReference>
<dbReference type="Pfam" id="PF00009">
    <property type="entry name" value="GTP_EFTU"/>
    <property type="match status" value="1"/>
</dbReference>
<dbReference type="Pfam" id="PF03144">
    <property type="entry name" value="GTP_EFTU_D2"/>
    <property type="match status" value="1"/>
</dbReference>
<dbReference type="Pfam" id="PF03143">
    <property type="entry name" value="GTP_EFTU_D3"/>
    <property type="match status" value="1"/>
</dbReference>
<dbReference type="PRINTS" id="PR00315">
    <property type="entry name" value="ELONGATNFCT"/>
</dbReference>
<dbReference type="SUPFAM" id="SSF50465">
    <property type="entry name" value="EF-Tu/eEF-1alpha/eIF2-gamma C-terminal domain"/>
    <property type="match status" value="1"/>
</dbReference>
<dbReference type="SUPFAM" id="SSF52540">
    <property type="entry name" value="P-loop containing nucleoside triphosphate hydrolases"/>
    <property type="match status" value="1"/>
</dbReference>
<dbReference type="SUPFAM" id="SSF50447">
    <property type="entry name" value="Translation proteins"/>
    <property type="match status" value="1"/>
</dbReference>
<dbReference type="PROSITE" id="PS00301">
    <property type="entry name" value="G_TR_1"/>
    <property type="match status" value="1"/>
</dbReference>
<dbReference type="PROSITE" id="PS51722">
    <property type="entry name" value="G_TR_2"/>
    <property type="match status" value="1"/>
</dbReference>
<comment type="function">
    <text>This protein promotes the GTP-dependent binding of aminoacyl-tRNA to the A-site of ribosomes during protein biosynthesis.</text>
</comment>
<comment type="subcellular location">
    <subcellularLocation>
        <location>Plastid</location>
        <location>Chloroplast</location>
    </subcellularLocation>
</comment>
<comment type="similarity">
    <text evidence="4">Belongs to the TRAFAC class translation factor GTPase superfamily. Classic translation factor GTPase family. EF-Tu/EF-1A subfamily.</text>
</comment>
<protein>
    <recommendedName>
        <fullName>Elongation factor TuA, chloroplastic</fullName>
        <shortName>EF-TuA</shortName>
    </recommendedName>
</protein>
<gene>
    <name type="primary">TUFA</name>
</gene>
<keyword id="KW-0150">Chloroplast</keyword>
<keyword id="KW-0251">Elongation factor</keyword>
<keyword id="KW-0342">GTP-binding</keyword>
<keyword id="KW-0547">Nucleotide-binding</keyword>
<keyword id="KW-0934">Plastid</keyword>
<keyword id="KW-0648">Protein biosynthesis</keyword>
<keyword id="KW-1185">Reference proteome</keyword>
<keyword id="KW-0809">Transit peptide</keyword>
<proteinExistence type="evidence at transcript level"/>
<sequence length="478" mass="51957">MASISAATATSSTKLVSSNSTNPLLPSSTKPSKLILSSSFTPNCSTLFLHSPATPSSTATHRHRRFTVRAARGKFERKKPHVNIGTIGHVDHGKTTLTAALTMALASMGNSAPKKYDEIDAAPEERARGITINTATVEYETENRHYAHVDCPGHADYVKNMITGAAQMDGAILVCSGADGPMPQTKEHILLAKQVGVPNMVVFLNKQDQVDDEELLQLVELEVRELLSSYEFPGDDIPIISGSALLALEALMANPSIKRGENQWVDKIYELMDAVDSYIPIPVRQTELPFLMAIEDVFSITGRGTVATGRVERGTVRIGDTVDIVGLKDTRSTTVTGVEMFQKILDEAMAGDNVGLLLRGIQKIDIQRGMVLAKPGTITPHTKFEAIVYVLKKEEGGRHSPFFSGYRPQFYMRTTDVTGKVTSITTDKGEESKMVMPGDRVNLVVELIMPVACEQGMRFAIREGGKTVGAGVIQKIIE</sequence>
<evidence type="ECO:0000250" key="1"/>
<evidence type="ECO:0000255" key="2"/>
<evidence type="ECO:0000256" key="3">
    <source>
        <dbReference type="SAM" id="MobiDB-lite"/>
    </source>
</evidence>
<evidence type="ECO:0000305" key="4"/>
<accession>Q40450</accession>
<accession>P41342</accession>
<organism>
    <name type="scientific">Nicotiana sylvestris</name>
    <name type="common">Wood tobacco</name>
    <name type="synonym">South American tobacco</name>
    <dbReference type="NCBI Taxonomy" id="4096"/>
    <lineage>
        <taxon>Eukaryota</taxon>
        <taxon>Viridiplantae</taxon>
        <taxon>Streptophyta</taxon>
        <taxon>Embryophyta</taxon>
        <taxon>Tracheophyta</taxon>
        <taxon>Spermatophyta</taxon>
        <taxon>Magnoliopsida</taxon>
        <taxon>eudicotyledons</taxon>
        <taxon>Gunneridae</taxon>
        <taxon>Pentapetalae</taxon>
        <taxon>asterids</taxon>
        <taxon>lamiids</taxon>
        <taxon>Solanales</taxon>
        <taxon>Solanaceae</taxon>
        <taxon>Nicotianoideae</taxon>
        <taxon>Nicotianeae</taxon>
        <taxon>Nicotiana</taxon>
    </lineage>
</organism>
<feature type="transit peptide" description="Chloroplast" evidence="2">
    <location>
        <begin position="1"/>
        <end position="69"/>
    </location>
</feature>
<feature type="chain" id="PRO_0000007455" description="Elongation factor TuA, chloroplastic">
    <location>
        <begin position="70"/>
        <end position="478"/>
    </location>
</feature>
<feature type="domain" description="tr-type G">
    <location>
        <begin position="79"/>
        <end position="283"/>
    </location>
</feature>
<feature type="region of interest" description="Disordered" evidence="3">
    <location>
        <begin position="1"/>
        <end position="31"/>
    </location>
</feature>
<feature type="region of interest" description="G1" evidence="1">
    <location>
        <begin position="88"/>
        <end position="95"/>
    </location>
</feature>
<feature type="region of interest" description="G2" evidence="1">
    <location>
        <begin position="129"/>
        <end position="133"/>
    </location>
</feature>
<feature type="region of interest" description="G3" evidence="1">
    <location>
        <begin position="150"/>
        <end position="153"/>
    </location>
</feature>
<feature type="region of interest" description="G4" evidence="1">
    <location>
        <begin position="205"/>
        <end position="208"/>
    </location>
</feature>
<feature type="region of interest" description="G5" evidence="1">
    <location>
        <begin position="243"/>
        <end position="245"/>
    </location>
</feature>
<feature type="compositionally biased region" description="Low complexity" evidence="3">
    <location>
        <begin position="1"/>
        <end position="29"/>
    </location>
</feature>
<feature type="binding site" evidence="1">
    <location>
        <begin position="88"/>
        <end position="95"/>
    </location>
    <ligand>
        <name>GTP</name>
        <dbReference type="ChEBI" id="CHEBI:37565"/>
    </ligand>
</feature>
<feature type="binding site" evidence="1">
    <location>
        <begin position="150"/>
        <end position="154"/>
    </location>
    <ligand>
        <name>GTP</name>
        <dbReference type="ChEBI" id="CHEBI:37565"/>
    </ligand>
</feature>
<feature type="binding site" evidence="1">
    <location>
        <begin position="205"/>
        <end position="208"/>
    </location>
    <ligand>
        <name>GTP</name>
        <dbReference type="ChEBI" id="CHEBI:37565"/>
    </ligand>
</feature>